<proteinExistence type="evidence at transcript level"/>
<sequence>MAPEENAGTELLLQGFERRFLAVRTLRSFPWQSLEAKLRDSSDSELLRDILQKTVRHPVCVKHPPSVKYAWCFLSELIKKHEAVHTEPLDKLYEVLTETLMAKESTQGHRSYLLSSGGSVTLSKSTAIISHGTTGLVTWDAALYLAEWAIENPAAFINRTVLELGSGAGLTGLAICKMCRPRAYIFSDPHSRVLEQLRGNVLLNGLSLEADITGNLDSPRVTVAQLDWDVAMVHQLSAFQPDVVIAADVLYCPEAIVSLVGVLQRLAACREHKRAPEVYVAFTVRNPETCQLFTTELGRDGIRWEAEAHHDQKLFPYGEHLEMAMLNLTL</sequence>
<protein>
    <recommendedName>
        <fullName evidence="3">Putative protein N-methyltransferase FAM86B1</fullName>
        <ecNumber evidence="1">2.1.1.-</ecNumber>
    </recommendedName>
</protein>
<dbReference type="EC" id="2.1.1.-" evidence="1"/>
<dbReference type="EMBL" id="AK098138">
    <property type="protein sequence ID" value="BAC05241.1"/>
    <property type="molecule type" value="mRNA"/>
</dbReference>
<dbReference type="EMBL" id="AC145124">
    <property type="status" value="NOT_ANNOTATED_CDS"/>
    <property type="molecule type" value="Genomic_DNA"/>
</dbReference>
<dbReference type="CCDS" id="CCDS59512.1">
    <molecule id="Q8N7N1-1"/>
</dbReference>
<dbReference type="RefSeq" id="NP_001077006.1">
    <molecule id="Q8N7N1-2"/>
    <property type="nucleotide sequence ID" value="NM_001083537.4"/>
</dbReference>
<dbReference type="RefSeq" id="XP_006716319.1">
    <molecule id="Q8N7N1-1"/>
    <property type="nucleotide sequence ID" value="XM_006716256.5"/>
</dbReference>
<dbReference type="SMR" id="Q8N7N1"/>
<dbReference type="BioGRID" id="124421">
    <property type="interactions" value="2"/>
</dbReference>
<dbReference type="FunCoup" id="Q8N7N1">
    <property type="interactions" value="427"/>
</dbReference>
<dbReference type="IntAct" id="Q8N7N1">
    <property type="interactions" value="2"/>
</dbReference>
<dbReference type="STRING" id="9606.ENSP00000407067"/>
<dbReference type="iPTMnet" id="Q8N7N1"/>
<dbReference type="PhosphoSitePlus" id="Q8N7N1"/>
<dbReference type="BioMuta" id="FAM86B1"/>
<dbReference type="DMDM" id="160014086"/>
<dbReference type="jPOST" id="Q8N7N1"/>
<dbReference type="MassIVE" id="Q8N7N1"/>
<dbReference type="PaxDb" id="9606-ENSP00000407067"/>
<dbReference type="PeptideAtlas" id="Q8N7N1"/>
<dbReference type="ProteomicsDB" id="22319"/>
<dbReference type="ProteomicsDB" id="72309">
    <molecule id="Q8N7N1-2"/>
</dbReference>
<dbReference type="Pumba" id="Q8N7N1"/>
<dbReference type="Antibodypedia" id="76809">
    <property type="antibodies" value="5 antibodies from 5 providers"/>
</dbReference>
<dbReference type="DNASU" id="85002"/>
<dbReference type="Ensembl" id="ENST00000340537.9">
    <molecule id="Q8N7N1-3"/>
    <property type="protein sequence ID" value="ENSP00000342610.4"/>
    <property type="gene ID" value="ENSG00000186523.15"/>
</dbReference>
<dbReference type="Ensembl" id="ENST00000448228.7">
    <molecule id="Q8N7N1-2"/>
    <property type="protein sequence ID" value="ENSP00000407067.2"/>
    <property type="gene ID" value="ENSG00000186523.15"/>
</dbReference>
<dbReference type="Ensembl" id="ENST00000533852.7">
    <molecule id="Q8N7N1-1"/>
    <property type="protein sequence ID" value="ENSP00000432931.1"/>
    <property type="gene ID" value="ENSG00000186523.15"/>
</dbReference>
<dbReference type="Ensembl" id="ENST00000534520.6">
    <molecule id="Q8N7N1-3"/>
    <property type="protein sequence ID" value="ENSP00000431362.1"/>
    <property type="gene ID" value="ENSG00000186523.15"/>
</dbReference>
<dbReference type="GeneID" id="85002"/>
<dbReference type="KEGG" id="hsa:85002"/>
<dbReference type="MANE-Select" id="ENST00000448228.7">
    <molecule id="Q8N7N1-2"/>
    <property type="protein sequence ID" value="ENSP00000407067.2"/>
    <property type="RefSeq nucleotide sequence ID" value="NM_001083537.4"/>
    <property type="RefSeq protein sequence ID" value="NP_001077006.1"/>
</dbReference>
<dbReference type="UCSC" id="uc010lse.4">
    <molecule id="Q8N7N1-1"/>
    <property type="organism name" value="human"/>
</dbReference>
<dbReference type="AGR" id="HGNC:28268"/>
<dbReference type="CTD" id="85002"/>
<dbReference type="GeneCards" id="FAM86B1"/>
<dbReference type="HGNC" id="HGNC:28268">
    <property type="gene designation" value="FAM86B1"/>
</dbReference>
<dbReference type="HPA" id="ENSG00000186523">
    <property type="expression patterns" value="Tissue enhanced (brain, pituitary gland)"/>
</dbReference>
<dbReference type="MIM" id="616122">
    <property type="type" value="gene"/>
</dbReference>
<dbReference type="neXtProt" id="NX_Q8N7N1"/>
<dbReference type="OpenTargets" id="ENSG00000186523"/>
<dbReference type="PharmGKB" id="PA142671859"/>
<dbReference type="VEuPathDB" id="HostDB:ENSG00000186523"/>
<dbReference type="eggNOG" id="KOG2497">
    <property type="taxonomic scope" value="Eukaryota"/>
</dbReference>
<dbReference type="GeneTree" id="ENSGT00510000047003"/>
<dbReference type="HOGENOM" id="CLU_038942_0_0_1"/>
<dbReference type="InParanoid" id="Q8N7N1"/>
<dbReference type="OMA" id="ECDISHE"/>
<dbReference type="OrthoDB" id="49253at2759"/>
<dbReference type="PAN-GO" id="Q8N7N1">
    <property type="GO annotations" value="0 GO annotations based on evolutionary models"/>
</dbReference>
<dbReference type="PhylomeDB" id="Q8N7N1"/>
<dbReference type="TreeFam" id="TF326304"/>
<dbReference type="PathwayCommons" id="Q8N7N1"/>
<dbReference type="SignaLink" id="Q8N7N1"/>
<dbReference type="BioGRID-ORCS" id="85002">
    <property type="hits" value="704 hits in 1048 CRISPR screens"/>
</dbReference>
<dbReference type="GenomeRNAi" id="85002"/>
<dbReference type="Pharos" id="Q8N7N1">
    <property type="development level" value="Tdark"/>
</dbReference>
<dbReference type="PRO" id="PR:Q8N7N1"/>
<dbReference type="Proteomes" id="UP000005640">
    <property type="component" value="Chromosome 8"/>
</dbReference>
<dbReference type="RNAct" id="Q8N7N1">
    <property type="molecule type" value="protein"/>
</dbReference>
<dbReference type="Bgee" id="ENSG00000186523">
    <property type="expression patterns" value="Expressed in right uterine tube and 96 other cell types or tissues"/>
</dbReference>
<dbReference type="ExpressionAtlas" id="Q8N7N1">
    <property type="expression patterns" value="baseline and differential"/>
</dbReference>
<dbReference type="GO" id="GO:0032991">
    <property type="term" value="C:protein-containing complex"/>
    <property type="evidence" value="ECO:0007669"/>
    <property type="project" value="UniProtKB-ARBA"/>
</dbReference>
<dbReference type="GO" id="GO:0008168">
    <property type="term" value="F:methyltransferase activity"/>
    <property type="evidence" value="ECO:0007669"/>
    <property type="project" value="UniProtKB-KW"/>
</dbReference>
<dbReference type="GO" id="GO:0016279">
    <property type="term" value="F:protein-lysine N-methyltransferase activity"/>
    <property type="evidence" value="ECO:0000318"/>
    <property type="project" value="GO_Central"/>
</dbReference>
<dbReference type="GO" id="GO:0032259">
    <property type="term" value="P:methylation"/>
    <property type="evidence" value="ECO:0007669"/>
    <property type="project" value="UniProtKB-KW"/>
</dbReference>
<dbReference type="FunFam" id="3.40.50.150:FF:000242">
    <property type="entry name" value="Protein-lysine N-methyltransferase EEF2KMT"/>
    <property type="match status" value="1"/>
</dbReference>
<dbReference type="Gene3D" id="3.40.50.150">
    <property type="entry name" value="Vaccinia Virus protein VP39"/>
    <property type="match status" value="1"/>
</dbReference>
<dbReference type="InterPro" id="IPR029426">
    <property type="entry name" value="FAM86_N"/>
</dbReference>
<dbReference type="InterPro" id="IPR019410">
    <property type="entry name" value="Methyltransf_16"/>
</dbReference>
<dbReference type="InterPro" id="IPR029063">
    <property type="entry name" value="SAM-dependent_MTases_sf"/>
</dbReference>
<dbReference type="PANTHER" id="PTHR14614">
    <property type="entry name" value="HEPATOCELLULAR CARCINOMA-ASSOCIATED ANTIGEN"/>
    <property type="match status" value="1"/>
</dbReference>
<dbReference type="PANTHER" id="PTHR14614:SF117">
    <property type="entry name" value="PROTEIN-LYSINE N-METHYLTRANSFERASE EEF2KMT-RELATED"/>
    <property type="match status" value="1"/>
</dbReference>
<dbReference type="Pfam" id="PF14904">
    <property type="entry name" value="FAM86"/>
    <property type="match status" value="1"/>
</dbReference>
<dbReference type="Pfam" id="PF10294">
    <property type="entry name" value="Methyltransf_16"/>
    <property type="match status" value="1"/>
</dbReference>
<dbReference type="SUPFAM" id="SSF53335">
    <property type="entry name" value="S-adenosyl-L-methionine-dependent methyltransferases"/>
    <property type="match status" value="1"/>
</dbReference>
<feature type="chain" id="PRO_0000307251" description="Putative protein N-methyltransferase FAM86B1">
    <location>
        <begin position="1"/>
        <end position="330"/>
    </location>
</feature>
<feature type="binding site" evidence="2">
    <location>
        <position position="139"/>
    </location>
    <ligand>
        <name>S-adenosyl-L-methionine</name>
        <dbReference type="ChEBI" id="CHEBI:59789"/>
    </ligand>
</feature>
<feature type="binding site" evidence="2">
    <location>
        <begin position="165"/>
        <end position="167"/>
    </location>
    <ligand>
        <name>S-adenosyl-L-methionine</name>
        <dbReference type="ChEBI" id="CHEBI:59789"/>
    </ligand>
</feature>
<feature type="binding site" evidence="2">
    <location>
        <position position="228"/>
    </location>
    <ligand>
        <name>S-adenosyl-L-methionine</name>
        <dbReference type="ChEBI" id="CHEBI:59789"/>
    </ligand>
</feature>
<feature type="binding site" evidence="2">
    <location>
        <position position="247"/>
    </location>
    <ligand>
        <name>S-adenosyl-L-methionine</name>
        <dbReference type="ChEBI" id="CHEBI:59789"/>
    </ligand>
</feature>
<feature type="splice variant" id="VSP_062507" description="In isoform 2 and isoform 3.">
    <location>
        <begin position="81"/>
        <end position="114"/>
    </location>
</feature>
<feature type="splice variant" id="VSP_062508" description="In isoform 3.">
    <original>TVLELGSGAGLTGLAICKMCRPRAYIFS</original>
    <variation>RAVLPRSHRVAGRGPAEAGCLPGAQAGS</variation>
    <location>
        <begin position="160"/>
        <end position="187"/>
    </location>
</feature>
<feature type="splice variant" id="VSP_062509" description="In isoform 3.">
    <location>
        <begin position="188"/>
        <end position="330"/>
    </location>
</feature>
<feature type="sequence conflict" description="In Ref. 1; BAC05241." evidence="3" ref="1">
    <original>D</original>
    <variation>Y</variation>
    <location>
        <position position="43"/>
    </location>
</feature>
<organism>
    <name type="scientific">Homo sapiens</name>
    <name type="common">Human</name>
    <dbReference type="NCBI Taxonomy" id="9606"/>
    <lineage>
        <taxon>Eukaryota</taxon>
        <taxon>Metazoa</taxon>
        <taxon>Chordata</taxon>
        <taxon>Craniata</taxon>
        <taxon>Vertebrata</taxon>
        <taxon>Euteleostomi</taxon>
        <taxon>Mammalia</taxon>
        <taxon>Eutheria</taxon>
        <taxon>Euarchontoglires</taxon>
        <taxon>Primates</taxon>
        <taxon>Haplorrhini</taxon>
        <taxon>Catarrhini</taxon>
        <taxon>Hominidae</taxon>
        <taxon>Homo</taxon>
    </lineage>
</organism>
<keyword id="KW-0025">Alternative splicing</keyword>
<keyword id="KW-0489">Methyltransferase</keyword>
<keyword id="KW-1185">Reference proteome</keyword>
<keyword id="KW-0949">S-adenosyl-L-methionine</keyword>
<keyword id="KW-0808">Transferase</keyword>
<reference key="1">
    <citation type="journal article" date="2004" name="Nat. Genet.">
        <title>Complete sequencing and characterization of 21,243 full-length human cDNAs.</title>
        <authorList>
            <person name="Ota T."/>
            <person name="Suzuki Y."/>
            <person name="Nishikawa T."/>
            <person name="Otsuki T."/>
            <person name="Sugiyama T."/>
            <person name="Irie R."/>
            <person name="Wakamatsu A."/>
            <person name="Hayashi K."/>
            <person name="Sato H."/>
            <person name="Nagai K."/>
            <person name="Kimura K."/>
            <person name="Makita H."/>
            <person name="Sekine M."/>
            <person name="Obayashi M."/>
            <person name="Nishi T."/>
            <person name="Shibahara T."/>
            <person name="Tanaka T."/>
            <person name="Ishii S."/>
            <person name="Yamamoto J."/>
            <person name="Saito K."/>
            <person name="Kawai Y."/>
            <person name="Isono Y."/>
            <person name="Nakamura Y."/>
            <person name="Nagahari K."/>
            <person name="Murakami K."/>
            <person name="Yasuda T."/>
            <person name="Iwayanagi T."/>
            <person name="Wagatsuma M."/>
            <person name="Shiratori A."/>
            <person name="Sudo H."/>
            <person name="Hosoiri T."/>
            <person name="Kaku Y."/>
            <person name="Kodaira H."/>
            <person name="Kondo H."/>
            <person name="Sugawara M."/>
            <person name="Takahashi M."/>
            <person name="Kanda K."/>
            <person name="Yokoi T."/>
            <person name="Furuya T."/>
            <person name="Kikkawa E."/>
            <person name="Omura Y."/>
            <person name="Abe K."/>
            <person name="Kamihara K."/>
            <person name="Katsuta N."/>
            <person name="Sato K."/>
            <person name="Tanikawa M."/>
            <person name="Yamazaki M."/>
            <person name="Ninomiya K."/>
            <person name="Ishibashi T."/>
            <person name="Yamashita H."/>
            <person name="Murakawa K."/>
            <person name="Fujimori K."/>
            <person name="Tanai H."/>
            <person name="Kimata M."/>
            <person name="Watanabe M."/>
            <person name="Hiraoka S."/>
            <person name="Chiba Y."/>
            <person name="Ishida S."/>
            <person name="Ono Y."/>
            <person name="Takiguchi S."/>
            <person name="Watanabe S."/>
            <person name="Yosida M."/>
            <person name="Hotuta T."/>
            <person name="Kusano J."/>
            <person name="Kanehori K."/>
            <person name="Takahashi-Fujii A."/>
            <person name="Hara H."/>
            <person name="Tanase T.-O."/>
            <person name="Nomura Y."/>
            <person name="Togiya S."/>
            <person name="Komai F."/>
            <person name="Hara R."/>
            <person name="Takeuchi K."/>
            <person name="Arita M."/>
            <person name="Imose N."/>
            <person name="Musashino K."/>
            <person name="Yuuki H."/>
            <person name="Oshima A."/>
            <person name="Sasaki N."/>
            <person name="Aotsuka S."/>
            <person name="Yoshikawa Y."/>
            <person name="Matsunawa H."/>
            <person name="Ichihara T."/>
            <person name="Shiohata N."/>
            <person name="Sano S."/>
            <person name="Moriya S."/>
            <person name="Momiyama H."/>
            <person name="Satoh N."/>
            <person name="Takami S."/>
            <person name="Terashima Y."/>
            <person name="Suzuki O."/>
            <person name="Nakagawa S."/>
            <person name="Senoh A."/>
            <person name="Mizoguchi H."/>
            <person name="Goto Y."/>
            <person name="Shimizu F."/>
            <person name="Wakebe H."/>
            <person name="Hishigaki H."/>
            <person name="Watanabe T."/>
            <person name="Sugiyama A."/>
            <person name="Takemoto M."/>
            <person name="Kawakami B."/>
            <person name="Yamazaki M."/>
            <person name="Watanabe K."/>
            <person name="Kumagai A."/>
            <person name="Itakura S."/>
            <person name="Fukuzumi Y."/>
            <person name="Fujimori Y."/>
            <person name="Komiyama M."/>
            <person name="Tashiro H."/>
            <person name="Tanigami A."/>
            <person name="Fujiwara T."/>
            <person name="Ono T."/>
            <person name="Yamada K."/>
            <person name="Fujii Y."/>
            <person name="Ozaki K."/>
            <person name="Hirao M."/>
            <person name="Ohmori Y."/>
            <person name="Kawabata A."/>
            <person name="Hikiji T."/>
            <person name="Kobatake N."/>
            <person name="Inagaki H."/>
            <person name="Ikema Y."/>
            <person name="Okamoto S."/>
            <person name="Okitani R."/>
            <person name="Kawakami T."/>
            <person name="Noguchi S."/>
            <person name="Itoh T."/>
            <person name="Shigeta K."/>
            <person name="Senba T."/>
            <person name="Matsumura K."/>
            <person name="Nakajima Y."/>
            <person name="Mizuno T."/>
            <person name="Morinaga M."/>
            <person name="Sasaki M."/>
            <person name="Togashi T."/>
            <person name="Oyama M."/>
            <person name="Hata H."/>
            <person name="Watanabe M."/>
            <person name="Komatsu T."/>
            <person name="Mizushima-Sugano J."/>
            <person name="Satoh T."/>
            <person name="Shirai Y."/>
            <person name="Takahashi Y."/>
            <person name="Nakagawa K."/>
            <person name="Okumura K."/>
            <person name="Nagase T."/>
            <person name="Nomura N."/>
            <person name="Kikuchi H."/>
            <person name="Masuho Y."/>
            <person name="Yamashita R."/>
            <person name="Nakai K."/>
            <person name="Yada T."/>
            <person name="Nakamura Y."/>
            <person name="Ohara O."/>
            <person name="Isogai T."/>
            <person name="Sugano S."/>
        </authorList>
    </citation>
    <scope>NUCLEOTIDE SEQUENCE [LARGE SCALE MRNA] (ISOFORM 3)</scope>
    <source>
        <tissue>Trachea</tissue>
    </source>
</reference>
<reference key="2">
    <citation type="journal article" date="2006" name="Nature">
        <title>DNA sequence and analysis of human chromosome 8.</title>
        <authorList>
            <person name="Nusbaum C."/>
            <person name="Mikkelsen T.S."/>
            <person name="Zody M.C."/>
            <person name="Asakawa S."/>
            <person name="Taudien S."/>
            <person name="Garber M."/>
            <person name="Kodira C.D."/>
            <person name="Schueler M.G."/>
            <person name="Shimizu A."/>
            <person name="Whittaker C.A."/>
            <person name="Chang J.L."/>
            <person name="Cuomo C.A."/>
            <person name="Dewar K."/>
            <person name="FitzGerald M.G."/>
            <person name="Yang X."/>
            <person name="Allen N.R."/>
            <person name="Anderson S."/>
            <person name="Asakawa T."/>
            <person name="Blechschmidt K."/>
            <person name="Bloom T."/>
            <person name="Borowsky M.L."/>
            <person name="Butler J."/>
            <person name="Cook A."/>
            <person name="Corum B."/>
            <person name="DeArellano K."/>
            <person name="DeCaprio D."/>
            <person name="Dooley K.T."/>
            <person name="Dorris L. III"/>
            <person name="Engels R."/>
            <person name="Gloeckner G."/>
            <person name="Hafez N."/>
            <person name="Hagopian D.S."/>
            <person name="Hall J.L."/>
            <person name="Ishikawa S.K."/>
            <person name="Jaffe D.B."/>
            <person name="Kamat A."/>
            <person name="Kudoh J."/>
            <person name="Lehmann R."/>
            <person name="Lokitsang T."/>
            <person name="Macdonald P."/>
            <person name="Major J.E."/>
            <person name="Matthews C.D."/>
            <person name="Mauceli E."/>
            <person name="Menzel U."/>
            <person name="Mihalev A.H."/>
            <person name="Minoshima S."/>
            <person name="Murayama Y."/>
            <person name="Naylor J.W."/>
            <person name="Nicol R."/>
            <person name="Nguyen C."/>
            <person name="O'Leary S.B."/>
            <person name="O'Neill K."/>
            <person name="Parker S.C.J."/>
            <person name="Polley A."/>
            <person name="Raymond C.K."/>
            <person name="Reichwald K."/>
            <person name="Rodriguez J."/>
            <person name="Sasaki T."/>
            <person name="Schilhabel M."/>
            <person name="Siddiqui R."/>
            <person name="Smith C.L."/>
            <person name="Sneddon T.P."/>
            <person name="Talamas J.A."/>
            <person name="Tenzin P."/>
            <person name="Topham K."/>
            <person name="Venkataraman V."/>
            <person name="Wen G."/>
            <person name="Yamazaki S."/>
            <person name="Young S.K."/>
            <person name="Zeng Q."/>
            <person name="Zimmer A.R."/>
            <person name="Rosenthal A."/>
            <person name="Birren B.W."/>
            <person name="Platzer M."/>
            <person name="Shimizu N."/>
            <person name="Lander E.S."/>
        </authorList>
    </citation>
    <scope>NUCLEOTIDE SEQUENCE [LARGE SCALE GENOMIC DNA]</scope>
</reference>
<evidence type="ECO:0000250" key="1">
    <source>
        <dbReference type="UniProtKB" id="P47163"/>
    </source>
</evidence>
<evidence type="ECO:0000250" key="2">
    <source>
        <dbReference type="UniProtKB" id="Q9H867"/>
    </source>
</evidence>
<evidence type="ECO:0000305" key="3"/>
<evidence type="ECO:0000312" key="4">
    <source>
        <dbReference type="HGNC" id="HGNC:28268"/>
    </source>
</evidence>
<gene>
    <name evidence="4" type="primary">FAM86B1</name>
</gene>
<comment type="alternative products">
    <event type="alternative splicing"/>
    <isoform>
        <id>Q8N7N1-1</id>
        <name>1</name>
        <sequence type="displayed"/>
    </isoform>
    <isoform>
        <id>Q8N7N1-2</id>
        <name>2</name>
        <sequence type="described" ref="VSP_062507"/>
    </isoform>
    <isoform>
        <id>Q8N7N1-3</id>
        <name>3</name>
        <sequence type="described" ref="VSP_062507 VSP_062508 VSP_062509"/>
    </isoform>
</comment>
<comment type="similarity">
    <text evidence="3">Belongs to the class I-like SAM-binding methyltransferase superfamily. EEF2KMT family.</text>
</comment>
<name>F86B1_HUMAN</name>
<accession>Q8N7N1</accession>
<accession>E9PN63</accession>